<organism>
    <name type="scientific">Chromohalobacter salexigens (strain ATCC BAA-138 / DSM 3043 / CIP 106854 / NCIMB 13768 / 1H11)</name>
    <dbReference type="NCBI Taxonomy" id="290398"/>
    <lineage>
        <taxon>Bacteria</taxon>
        <taxon>Pseudomonadati</taxon>
        <taxon>Pseudomonadota</taxon>
        <taxon>Gammaproteobacteria</taxon>
        <taxon>Oceanospirillales</taxon>
        <taxon>Halomonadaceae</taxon>
        <taxon>Chromohalobacter</taxon>
    </lineage>
</organism>
<name>HSLU_CHRSD</name>
<proteinExistence type="inferred from homology"/>
<feature type="chain" id="PRO_1000189696" description="ATP-dependent protease ATPase subunit HslU">
    <location>
        <begin position="1"/>
        <end position="441"/>
    </location>
</feature>
<feature type="region of interest" description="Disordered" evidence="2">
    <location>
        <begin position="131"/>
        <end position="158"/>
    </location>
</feature>
<feature type="compositionally biased region" description="Basic and acidic residues" evidence="2">
    <location>
        <begin position="140"/>
        <end position="152"/>
    </location>
</feature>
<feature type="binding site" evidence="1">
    <location>
        <position position="18"/>
    </location>
    <ligand>
        <name>ATP</name>
        <dbReference type="ChEBI" id="CHEBI:30616"/>
    </ligand>
</feature>
<feature type="binding site" evidence="1">
    <location>
        <begin position="60"/>
        <end position="65"/>
    </location>
    <ligand>
        <name>ATP</name>
        <dbReference type="ChEBI" id="CHEBI:30616"/>
    </ligand>
</feature>
<feature type="binding site" evidence="1">
    <location>
        <position position="254"/>
    </location>
    <ligand>
        <name>ATP</name>
        <dbReference type="ChEBI" id="CHEBI:30616"/>
    </ligand>
</feature>
<feature type="binding site" evidence="1">
    <location>
        <position position="320"/>
    </location>
    <ligand>
        <name>ATP</name>
        <dbReference type="ChEBI" id="CHEBI:30616"/>
    </ligand>
</feature>
<feature type="binding site" evidence="1">
    <location>
        <position position="392"/>
    </location>
    <ligand>
        <name>ATP</name>
        <dbReference type="ChEBI" id="CHEBI:30616"/>
    </ligand>
</feature>
<comment type="function">
    <text evidence="1">ATPase subunit of a proteasome-like degradation complex; this subunit has chaperone activity. The binding of ATP and its subsequent hydrolysis by HslU are essential for unfolding of protein substrates subsequently hydrolyzed by HslV. HslU recognizes the N-terminal part of its protein substrates and unfolds these before they are guided to HslV for hydrolysis.</text>
</comment>
<comment type="subunit">
    <text evidence="1">A double ring-shaped homohexamer of HslV is capped on each side by a ring-shaped HslU homohexamer. The assembly of the HslU/HslV complex is dependent on binding of ATP.</text>
</comment>
<comment type="subcellular location">
    <subcellularLocation>
        <location evidence="1">Cytoplasm</location>
    </subcellularLocation>
</comment>
<comment type="similarity">
    <text evidence="1">Belongs to the ClpX chaperone family. HslU subfamily.</text>
</comment>
<dbReference type="EMBL" id="CP000285">
    <property type="protein sequence ID" value="ABE57961.1"/>
    <property type="molecule type" value="Genomic_DNA"/>
</dbReference>
<dbReference type="RefSeq" id="WP_011505907.1">
    <property type="nucleotide sequence ID" value="NC_007963.1"/>
</dbReference>
<dbReference type="SMR" id="Q1QZZ7"/>
<dbReference type="STRING" id="290398.Csal_0599"/>
<dbReference type="GeneID" id="95333354"/>
<dbReference type="KEGG" id="csa:Csal_0599"/>
<dbReference type="eggNOG" id="COG1220">
    <property type="taxonomic scope" value="Bacteria"/>
</dbReference>
<dbReference type="HOGENOM" id="CLU_033123_0_0_6"/>
<dbReference type="OrthoDB" id="9804062at2"/>
<dbReference type="Proteomes" id="UP000000239">
    <property type="component" value="Chromosome"/>
</dbReference>
<dbReference type="GO" id="GO:0009376">
    <property type="term" value="C:HslUV protease complex"/>
    <property type="evidence" value="ECO:0007669"/>
    <property type="project" value="UniProtKB-UniRule"/>
</dbReference>
<dbReference type="GO" id="GO:0005524">
    <property type="term" value="F:ATP binding"/>
    <property type="evidence" value="ECO:0007669"/>
    <property type="project" value="UniProtKB-UniRule"/>
</dbReference>
<dbReference type="GO" id="GO:0016887">
    <property type="term" value="F:ATP hydrolysis activity"/>
    <property type="evidence" value="ECO:0007669"/>
    <property type="project" value="InterPro"/>
</dbReference>
<dbReference type="GO" id="GO:0008233">
    <property type="term" value="F:peptidase activity"/>
    <property type="evidence" value="ECO:0007669"/>
    <property type="project" value="InterPro"/>
</dbReference>
<dbReference type="GO" id="GO:0036402">
    <property type="term" value="F:proteasome-activating activity"/>
    <property type="evidence" value="ECO:0007669"/>
    <property type="project" value="UniProtKB-UniRule"/>
</dbReference>
<dbReference type="GO" id="GO:0043335">
    <property type="term" value="P:protein unfolding"/>
    <property type="evidence" value="ECO:0007669"/>
    <property type="project" value="UniProtKB-UniRule"/>
</dbReference>
<dbReference type="GO" id="GO:0051603">
    <property type="term" value="P:proteolysis involved in protein catabolic process"/>
    <property type="evidence" value="ECO:0007669"/>
    <property type="project" value="TreeGrafter"/>
</dbReference>
<dbReference type="CDD" id="cd19498">
    <property type="entry name" value="RecA-like_HslU"/>
    <property type="match status" value="1"/>
</dbReference>
<dbReference type="FunFam" id="1.10.8.10:FF:000028">
    <property type="entry name" value="ATP-dependent protease ATPase subunit HslU"/>
    <property type="match status" value="1"/>
</dbReference>
<dbReference type="FunFam" id="3.40.50.300:FF:000213">
    <property type="entry name" value="ATP-dependent protease ATPase subunit HslU"/>
    <property type="match status" value="1"/>
</dbReference>
<dbReference type="FunFam" id="3.40.50.300:FF:000220">
    <property type="entry name" value="ATP-dependent protease ATPase subunit HslU"/>
    <property type="match status" value="1"/>
</dbReference>
<dbReference type="Gene3D" id="1.10.8.60">
    <property type="match status" value="1"/>
</dbReference>
<dbReference type="Gene3D" id="1.10.8.10">
    <property type="entry name" value="DNA helicase RuvA subunit, C-terminal domain"/>
    <property type="match status" value="1"/>
</dbReference>
<dbReference type="Gene3D" id="3.40.50.300">
    <property type="entry name" value="P-loop containing nucleotide triphosphate hydrolases"/>
    <property type="match status" value="2"/>
</dbReference>
<dbReference type="HAMAP" id="MF_00249">
    <property type="entry name" value="HslU"/>
    <property type="match status" value="1"/>
</dbReference>
<dbReference type="InterPro" id="IPR003593">
    <property type="entry name" value="AAA+_ATPase"/>
</dbReference>
<dbReference type="InterPro" id="IPR050052">
    <property type="entry name" value="ATP-dep_Clp_protease_ClpX"/>
</dbReference>
<dbReference type="InterPro" id="IPR003959">
    <property type="entry name" value="ATPase_AAA_core"/>
</dbReference>
<dbReference type="InterPro" id="IPR019489">
    <property type="entry name" value="Clp_ATPase_C"/>
</dbReference>
<dbReference type="InterPro" id="IPR004491">
    <property type="entry name" value="HslU"/>
</dbReference>
<dbReference type="InterPro" id="IPR027417">
    <property type="entry name" value="P-loop_NTPase"/>
</dbReference>
<dbReference type="NCBIfam" id="TIGR00390">
    <property type="entry name" value="hslU"/>
    <property type="match status" value="1"/>
</dbReference>
<dbReference type="NCBIfam" id="NF003544">
    <property type="entry name" value="PRK05201.1"/>
    <property type="match status" value="1"/>
</dbReference>
<dbReference type="PANTHER" id="PTHR48102">
    <property type="entry name" value="ATP-DEPENDENT CLP PROTEASE ATP-BINDING SUBUNIT CLPX-LIKE, MITOCHONDRIAL-RELATED"/>
    <property type="match status" value="1"/>
</dbReference>
<dbReference type="PANTHER" id="PTHR48102:SF3">
    <property type="entry name" value="ATP-DEPENDENT PROTEASE ATPASE SUBUNIT HSLU"/>
    <property type="match status" value="1"/>
</dbReference>
<dbReference type="Pfam" id="PF00004">
    <property type="entry name" value="AAA"/>
    <property type="match status" value="1"/>
</dbReference>
<dbReference type="Pfam" id="PF07724">
    <property type="entry name" value="AAA_2"/>
    <property type="match status" value="1"/>
</dbReference>
<dbReference type="SMART" id="SM00382">
    <property type="entry name" value="AAA"/>
    <property type="match status" value="1"/>
</dbReference>
<dbReference type="SMART" id="SM01086">
    <property type="entry name" value="ClpB_D2-small"/>
    <property type="match status" value="1"/>
</dbReference>
<dbReference type="SUPFAM" id="SSF52540">
    <property type="entry name" value="P-loop containing nucleoside triphosphate hydrolases"/>
    <property type="match status" value="1"/>
</dbReference>
<accession>Q1QZZ7</accession>
<protein>
    <recommendedName>
        <fullName evidence="1">ATP-dependent protease ATPase subunit HslU</fullName>
    </recommendedName>
    <alternativeName>
        <fullName evidence="1">Unfoldase HslU</fullName>
    </alternativeName>
</protein>
<gene>
    <name evidence="1" type="primary">hslU</name>
    <name type="ordered locus">Csal_0599</name>
</gene>
<sequence>MTQMTPREIVHALDQYIIGQQEAKRSVAIALRNRWRRMQLDDSLRGEVVPKNILMIGPTGVGKTEIARRLAKLAGAPFIKVEATKFTEVGYVGRDVESIIRDLVEMAMKMVREQAKEEVAHKAEDATEERILDALLPRPRGSEYDHARDESSTRQTFRKKLREGQLDDKEIDIEITPQGGGFDISAPPGMEEMTSQLQSMFSNMGKQKSETRRVTVEEARRLLHDEEAAKLVNEEQIKHRAIEAVEQNGIVFLDEIDKVAKRGDSGSGGDVSREGVQRDLLPLIEGSTVSTKHGMVKTDHILFIASGAFHLSKPSDLIPELQGRLPIRVELQALTPDDFKRILTEPSAALTKQYQALLATDGLEVNFTDEGIARIAEIAWQVNDGTENIGARRLHTVMERLLEEPSFQGGDMASPLTIDAAYVDEQLGELATDEDLSRYIL</sequence>
<keyword id="KW-0067">ATP-binding</keyword>
<keyword id="KW-0143">Chaperone</keyword>
<keyword id="KW-0963">Cytoplasm</keyword>
<keyword id="KW-0547">Nucleotide-binding</keyword>
<keyword id="KW-1185">Reference proteome</keyword>
<keyword id="KW-0346">Stress response</keyword>
<evidence type="ECO:0000255" key="1">
    <source>
        <dbReference type="HAMAP-Rule" id="MF_00249"/>
    </source>
</evidence>
<evidence type="ECO:0000256" key="2">
    <source>
        <dbReference type="SAM" id="MobiDB-lite"/>
    </source>
</evidence>
<reference key="1">
    <citation type="journal article" date="2011" name="Stand. Genomic Sci.">
        <title>Complete genome sequence of the halophilic and highly halotolerant Chromohalobacter salexigens type strain (1H11(T)).</title>
        <authorList>
            <person name="Copeland A."/>
            <person name="O'Connor K."/>
            <person name="Lucas S."/>
            <person name="Lapidus A."/>
            <person name="Berry K.W."/>
            <person name="Detter J.C."/>
            <person name="Del Rio T.G."/>
            <person name="Hammon N."/>
            <person name="Dalin E."/>
            <person name="Tice H."/>
            <person name="Pitluck S."/>
            <person name="Bruce D."/>
            <person name="Goodwin L."/>
            <person name="Han C."/>
            <person name="Tapia R."/>
            <person name="Saunders E."/>
            <person name="Schmutz J."/>
            <person name="Brettin T."/>
            <person name="Larimer F."/>
            <person name="Land M."/>
            <person name="Hauser L."/>
            <person name="Vargas C."/>
            <person name="Nieto J.J."/>
            <person name="Kyrpides N.C."/>
            <person name="Ivanova N."/>
            <person name="Goker M."/>
            <person name="Klenk H.P."/>
            <person name="Csonka L.N."/>
            <person name="Woyke T."/>
        </authorList>
    </citation>
    <scope>NUCLEOTIDE SEQUENCE [LARGE SCALE GENOMIC DNA]</scope>
    <source>
        <strain>ATCC BAA-138 / DSM 3043 / CIP 106854 / NCIMB 13768 / 1H11</strain>
    </source>
</reference>